<dbReference type="EC" id="1.1.1.267" evidence="1"/>
<dbReference type="EMBL" id="AE000520">
    <property type="protein sequence ID" value="AAC65574.1"/>
    <property type="status" value="ALT_INIT"/>
    <property type="molecule type" value="Genomic_DNA"/>
</dbReference>
<dbReference type="PIR" id="C71304">
    <property type="entry name" value="C71304"/>
</dbReference>
<dbReference type="RefSeq" id="WP_013945233.1">
    <property type="nucleotide sequence ID" value="NC_021490.2"/>
</dbReference>
<dbReference type="SMR" id="O83610"/>
<dbReference type="STRING" id="243276.TP_0601"/>
<dbReference type="EnsemblBacteria" id="AAC65574">
    <property type="protein sequence ID" value="AAC65574"/>
    <property type="gene ID" value="TP_0601"/>
</dbReference>
<dbReference type="GeneID" id="93876368"/>
<dbReference type="KEGG" id="tpa:TP_0601"/>
<dbReference type="eggNOG" id="COG0743">
    <property type="taxonomic scope" value="Bacteria"/>
</dbReference>
<dbReference type="HOGENOM" id="CLU_035714_4_0_12"/>
<dbReference type="OrthoDB" id="9806546at2"/>
<dbReference type="UniPathway" id="UPA00056">
    <property type="reaction ID" value="UER00092"/>
</dbReference>
<dbReference type="Proteomes" id="UP000000811">
    <property type="component" value="Chromosome"/>
</dbReference>
<dbReference type="GO" id="GO:0030604">
    <property type="term" value="F:1-deoxy-D-xylulose-5-phosphate reductoisomerase activity"/>
    <property type="evidence" value="ECO:0007669"/>
    <property type="project" value="UniProtKB-UniRule"/>
</dbReference>
<dbReference type="GO" id="GO:0030145">
    <property type="term" value="F:manganese ion binding"/>
    <property type="evidence" value="ECO:0007669"/>
    <property type="project" value="TreeGrafter"/>
</dbReference>
<dbReference type="GO" id="GO:0070402">
    <property type="term" value="F:NADPH binding"/>
    <property type="evidence" value="ECO:0007669"/>
    <property type="project" value="InterPro"/>
</dbReference>
<dbReference type="GO" id="GO:0051484">
    <property type="term" value="P:isopentenyl diphosphate biosynthetic process, methylerythritol 4-phosphate pathway involved in terpenoid biosynthetic process"/>
    <property type="evidence" value="ECO:0007669"/>
    <property type="project" value="TreeGrafter"/>
</dbReference>
<dbReference type="Gene3D" id="1.10.1740.10">
    <property type="match status" value="1"/>
</dbReference>
<dbReference type="Gene3D" id="3.40.50.720">
    <property type="entry name" value="NAD(P)-binding Rossmann-like Domain"/>
    <property type="match status" value="1"/>
</dbReference>
<dbReference type="HAMAP" id="MF_00183">
    <property type="entry name" value="DXP_reductoisom"/>
    <property type="match status" value="1"/>
</dbReference>
<dbReference type="InterPro" id="IPR003821">
    <property type="entry name" value="DXP_reductoisomerase"/>
</dbReference>
<dbReference type="InterPro" id="IPR013644">
    <property type="entry name" value="DXP_reductoisomerase_C"/>
</dbReference>
<dbReference type="InterPro" id="IPR013512">
    <property type="entry name" value="DXP_reductoisomerase_N"/>
</dbReference>
<dbReference type="InterPro" id="IPR026877">
    <property type="entry name" value="DXPR_C"/>
</dbReference>
<dbReference type="InterPro" id="IPR036169">
    <property type="entry name" value="DXPR_C_sf"/>
</dbReference>
<dbReference type="InterPro" id="IPR036291">
    <property type="entry name" value="NAD(P)-bd_dom_sf"/>
</dbReference>
<dbReference type="NCBIfam" id="TIGR00243">
    <property type="entry name" value="Dxr"/>
    <property type="match status" value="1"/>
</dbReference>
<dbReference type="PANTHER" id="PTHR30525">
    <property type="entry name" value="1-DEOXY-D-XYLULOSE 5-PHOSPHATE REDUCTOISOMERASE"/>
    <property type="match status" value="1"/>
</dbReference>
<dbReference type="PANTHER" id="PTHR30525:SF0">
    <property type="entry name" value="1-DEOXY-D-XYLULOSE 5-PHOSPHATE REDUCTOISOMERASE, CHLOROPLASTIC"/>
    <property type="match status" value="1"/>
</dbReference>
<dbReference type="Pfam" id="PF08436">
    <property type="entry name" value="DXP_redisom_C"/>
    <property type="match status" value="1"/>
</dbReference>
<dbReference type="Pfam" id="PF02670">
    <property type="entry name" value="DXP_reductoisom"/>
    <property type="match status" value="1"/>
</dbReference>
<dbReference type="Pfam" id="PF13288">
    <property type="entry name" value="DXPR_C"/>
    <property type="match status" value="1"/>
</dbReference>
<dbReference type="PIRSF" id="PIRSF006205">
    <property type="entry name" value="Dxp_reductismrs"/>
    <property type="match status" value="1"/>
</dbReference>
<dbReference type="SUPFAM" id="SSF69055">
    <property type="entry name" value="1-deoxy-D-xylulose-5-phosphate reductoisomerase, C-terminal domain"/>
    <property type="match status" value="1"/>
</dbReference>
<dbReference type="SUPFAM" id="SSF55347">
    <property type="entry name" value="Glyceraldehyde-3-phosphate dehydrogenase-like, C-terminal domain"/>
    <property type="match status" value="1"/>
</dbReference>
<dbReference type="SUPFAM" id="SSF51735">
    <property type="entry name" value="NAD(P)-binding Rossmann-fold domains"/>
    <property type="match status" value="1"/>
</dbReference>
<accession>O83610</accession>
<proteinExistence type="inferred from homology"/>
<keyword id="KW-0414">Isoprene biosynthesis</keyword>
<keyword id="KW-0464">Manganese</keyword>
<keyword id="KW-0479">Metal-binding</keyword>
<keyword id="KW-0521">NADP</keyword>
<keyword id="KW-0560">Oxidoreductase</keyword>
<keyword id="KW-1185">Reference proteome</keyword>
<reference key="1">
    <citation type="journal article" date="1998" name="Science">
        <title>Complete genome sequence of Treponema pallidum, the syphilis spirochete.</title>
        <authorList>
            <person name="Fraser C.M."/>
            <person name="Norris S.J."/>
            <person name="Weinstock G.M."/>
            <person name="White O."/>
            <person name="Sutton G.G."/>
            <person name="Dodson R.J."/>
            <person name="Gwinn M.L."/>
            <person name="Hickey E.K."/>
            <person name="Clayton R.A."/>
            <person name="Ketchum K.A."/>
            <person name="Sodergren E."/>
            <person name="Hardham J.M."/>
            <person name="McLeod M.P."/>
            <person name="Salzberg S.L."/>
            <person name="Peterson J.D."/>
            <person name="Khalak H.G."/>
            <person name="Richardson D.L."/>
            <person name="Howell J.K."/>
            <person name="Chidambaram M."/>
            <person name="Utterback T.R."/>
            <person name="McDonald L.A."/>
            <person name="Artiach P."/>
            <person name="Bowman C."/>
            <person name="Cotton M.D."/>
            <person name="Fujii C."/>
            <person name="Garland S.A."/>
            <person name="Hatch B."/>
            <person name="Horst K."/>
            <person name="Roberts K.M."/>
            <person name="Sandusky M."/>
            <person name="Weidman J.F."/>
            <person name="Smith H.O."/>
            <person name="Venter J.C."/>
        </authorList>
    </citation>
    <scope>NUCLEOTIDE SEQUENCE [LARGE SCALE GENOMIC DNA]</scope>
    <source>
        <strain>Nichols</strain>
    </source>
</reference>
<protein>
    <recommendedName>
        <fullName evidence="1">1-deoxy-D-xylulose 5-phosphate reductoisomerase</fullName>
        <shortName evidence="1">DXP reductoisomerase</shortName>
        <ecNumber evidence="1">1.1.1.267</ecNumber>
    </recommendedName>
    <alternativeName>
        <fullName evidence="1">1-deoxyxylulose-5-phosphate reductoisomerase</fullName>
    </alternativeName>
    <alternativeName>
        <fullName evidence="1">2-C-methyl-D-erythritol 4-phosphate synthase</fullName>
    </alternativeName>
</protein>
<evidence type="ECO:0000255" key="1">
    <source>
        <dbReference type="HAMAP-Rule" id="MF_00183"/>
    </source>
</evidence>
<evidence type="ECO:0000305" key="2"/>
<comment type="function">
    <text evidence="1">Catalyzes the NADPH-dependent rearrangement and reduction of 1-deoxy-D-xylulose-5-phosphate (DXP) to 2-C-methyl-D-erythritol 4-phosphate (MEP).</text>
</comment>
<comment type="catalytic activity">
    <reaction evidence="1">
        <text>2-C-methyl-D-erythritol 4-phosphate + NADP(+) = 1-deoxy-D-xylulose 5-phosphate + NADPH + H(+)</text>
        <dbReference type="Rhea" id="RHEA:13717"/>
        <dbReference type="ChEBI" id="CHEBI:15378"/>
        <dbReference type="ChEBI" id="CHEBI:57783"/>
        <dbReference type="ChEBI" id="CHEBI:57792"/>
        <dbReference type="ChEBI" id="CHEBI:58262"/>
        <dbReference type="ChEBI" id="CHEBI:58349"/>
        <dbReference type="EC" id="1.1.1.267"/>
    </reaction>
    <physiologicalReaction direction="right-to-left" evidence="1">
        <dbReference type="Rhea" id="RHEA:13719"/>
    </physiologicalReaction>
</comment>
<comment type="cofactor">
    <cofactor evidence="1">
        <name>Mg(2+)</name>
        <dbReference type="ChEBI" id="CHEBI:18420"/>
    </cofactor>
    <cofactor evidence="1">
        <name>Mn(2+)</name>
        <dbReference type="ChEBI" id="CHEBI:29035"/>
    </cofactor>
</comment>
<comment type="pathway">
    <text evidence="1">Isoprenoid biosynthesis; isopentenyl diphosphate biosynthesis via DXP pathway; isopentenyl diphosphate from 1-deoxy-D-xylulose 5-phosphate: step 1/6.</text>
</comment>
<comment type="similarity">
    <text evidence="1">Belongs to the DXR family.</text>
</comment>
<comment type="sequence caution" evidence="2">
    <conflict type="erroneous initiation">
        <sequence resource="EMBL-CDS" id="AAC65574"/>
    </conflict>
</comment>
<organism>
    <name type="scientific">Treponema pallidum (strain Nichols)</name>
    <dbReference type="NCBI Taxonomy" id="243276"/>
    <lineage>
        <taxon>Bacteria</taxon>
        <taxon>Pseudomonadati</taxon>
        <taxon>Spirochaetota</taxon>
        <taxon>Spirochaetia</taxon>
        <taxon>Spirochaetales</taxon>
        <taxon>Treponemataceae</taxon>
        <taxon>Treponema</taxon>
    </lineage>
</organism>
<feature type="chain" id="PRO_0000163727" description="1-deoxy-D-xylulose 5-phosphate reductoisomerase">
    <location>
        <begin position="1"/>
        <end position="376"/>
    </location>
</feature>
<feature type="binding site" evidence="1">
    <location>
        <position position="12"/>
    </location>
    <ligand>
        <name>NADPH</name>
        <dbReference type="ChEBI" id="CHEBI:57783"/>
    </ligand>
</feature>
<feature type="binding site" evidence="1">
    <location>
        <position position="13"/>
    </location>
    <ligand>
        <name>NADPH</name>
        <dbReference type="ChEBI" id="CHEBI:57783"/>
    </ligand>
</feature>
<feature type="binding site" evidence="1">
    <location>
        <position position="14"/>
    </location>
    <ligand>
        <name>NADPH</name>
        <dbReference type="ChEBI" id="CHEBI:57783"/>
    </ligand>
</feature>
<feature type="binding site" evidence="1">
    <location>
        <position position="15"/>
    </location>
    <ligand>
        <name>NADPH</name>
        <dbReference type="ChEBI" id="CHEBI:57783"/>
    </ligand>
</feature>
<feature type="binding site" evidence="1">
    <location>
        <position position="39"/>
    </location>
    <ligand>
        <name>NADPH</name>
        <dbReference type="ChEBI" id="CHEBI:57783"/>
    </ligand>
</feature>
<feature type="binding site" evidence="1">
    <location>
        <position position="40"/>
    </location>
    <ligand>
        <name>NADPH</name>
        <dbReference type="ChEBI" id="CHEBI:57783"/>
    </ligand>
</feature>
<feature type="binding site" evidence="1">
    <location>
        <position position="110"/>
    </location>
    <ligand>
        <name>NADPH</name>
        <dbReference type="ChEBI" id="CHEBI:57783"/>
    </ligand>
</feature>
<feature type="binding site" evidence="1">
    <location>
        <position position="111"/>
    </location>
    <ligand>
        <name>1-deoxy-D-xylulose 5-phosphate</name>
        <dbReference type="ChEBI" id="CHEBI:57792"/>
    </ligand>
</feature>
<feature type="binding site" evidence="1">
    <location>
        <position position="112"/>
    </location>
    <ligand>
        <name>NADPH</name>
        <dbReference type="ChEBI" id="CHEBI:57783"/>
    </ligand>
</feature>
<feature type="binding site" evidence="1">
    <location>
        <position position="136"/>
    </location>
    <ligand>
        <name>Mn(2+)</name>
        <dbReference type="ChEBI" id="CHEBI:29035"/>
    </ligand>
</feature>
<feature type="binding site" evidence="1">
    <location>
        <position position="137"/>
    </location>
    <ligand>
        <name>1-deoxy-D-xylulose 5-phosphate</name>
        <dbReference type="ChEBI" id="CHEBI:57792"/>
    </ligand>
</feature>
<feature type="binding site" evidence="1">
    <location>
        <position position="138"/>
    </location>
    <ligand>
        <name>1-deoxy-D-xylulose 5-phosphate</name>
        <dbReference type="ChEBI" id="CHEBI:57792"/>
    </ligand>
</feature>
<feature type="binding site" evidence="1">
    <location>
        <position position="138"/>
    </location>
    <ligand>
        <name>Mn(2+)</name>
        <dbReference type="ChEBI" id="CHEBI:29035"/>
    </ligand>
</feature>
<feature type="binding site" evidence="1">
    <location>
        <position position="162"/>
    </location>
    <ligand>
        <name>1-deoxy-D-xylulose 5-phosphate</name>
        <dbReference type="ChEBI" id="CHEBI:57792"/>
    </ligand>
</feature>
<feature type="binding site" evidence="1">
    <location>
        <position position="185"/>
    </location>
    <ligand>
        <name>1-deoxy-D-xylulose 5-phosphate</name>
        <dbReference type="ChEBI" id="CHEBI:57792"/>
    </ligand>
</feature>
<feature type="binding site" evidence="1">
    <location>
        <position position="191"/>
    </location>
    <ligand>
        <name>NADPH</name>
        <dbReference type="ChEBI" id="CHEBI:57783"/>
    </ligand>
</feature>
<feature type="binding site" evidence="1">
    <location>
        <position position="198"/>
    </location>
    <ligand>
        <name>1-deoxy-D-xylulose 5-phosphate</name>
        <dbReference type="ChEBI" id="CHEBI:57792"/>
    </ligand>
</feature>
<feature type="binding site" evidence="1">
    <location>
        <position position="203"/>
    </location>
    <ligand>
        <name>1-deoxy-D-xylulose 5-phosphate</name>
        <dbReference type="ChEBI" id="CHEBI:57792"/>
    </ligand>
</feature>
<feature type="binding site" evidence="1">
    <location>
        <position position="204"/>
    </location>
    <ligand>
        <name>1-deoxy-D-xylulose 5-phosphate</name>
        <dbReference type="ChEBI" id="CHEBI:57792"/>
    </ligand>
</feature>
<feature type="binding site" evidence="1">
    <location>
        <position position="207"/>
    </location>
    <ligand>
        <name>1-deoxy-D-xylulose 5-phosphate</name>
        <dbReference type="ChEBI" id="CHEBI:57792"/>
    </ligand>
</feature>
<feature type="binding site" evidence="1">
    <location>
        <position position="207"/>
    </location>
    <ligand>
        <name>Mn(2+)</name>
        <dbReference type="ChEBI" id="CHEBI:29035"/>
    </ligand>
</feature>
<name>DXR_TREPA</name>
<gene>
    <name evidence="1" type="primary">dxr</name>
    <name type="ordered locus">TP_0601</name>
</gene>
<sequence length="376" mass="40952">MSVRRVVVLGITGSIGAAALKLLRRFPDRFLLVGASGHRQTEYARALAREFSLSDITMTGSCSEQEGRARIKRLLSSCEAEVVVNGIAGAAGLFASLEVLKTRCTLALANKESVVLAASLLHAAARESGATIVPVDSEHAAIFQLIAAHGAHAVAQVVLTASGGPFRTFSKECLAHVTVEDALQHPTWRMGKKISVDSATLANKALEVIEAVQFFRIPVDRVTVVVHPQSIVHALVQCHSGETYAQLSVPDMASPLLYALLYPDAPPAYQTPLDFTSGLSLHFEPPRVDDFPLLRMGFDVARAQRAYPIAFNAANEEAVRAFLQRNIGFLDIAHVTAQALQEDWRAIPQTFEEVMACDTRARMCARTCIAQRWRER</sequence>